<reference key="1">
    <citation type="journal article" date="1996" name="J. Virol.">
        <title>Determination and analysis of the complete nucleotide sequence of human herpesvirus.</title>
        <authorList>
            <person name="Nicholas J."/>
        </authorList>
    </citation>
    <scope>NUCLEOTIDE SEQUENCE [LARGE SCALE GENOMIC DNA]</scope>
</reference>
<feature type="chain" id="PRO_0000115920" description="Cytoplasmic envelopment protein 1">
    <location>
        <begin position="1"/>
        <end position="256"/>
    </location>
</feature>
<dbReference type="EMBL" id="U43400">
    <property type="protein sequence ID" value="AAC54736.1"/>
    <property type="molecule type" value="Genomic_DNA"/>
</dbReference>
<dbReference type="PIR" id="T41976">
    <property type="entry name" value="T41976"/>
</dbReference>
<dbReference type="RefSeq" id="YP_073815.1">
    <property type="nucleotide sequence ID" value="NC_001716.2"/>
</dbReference>
<dbReference type="DNASU" id="3289533"/>
<dbReference type="GeneID" id="3289533"/>
<dbReference type="KEGG" id="vg:3289533"/>
<dbReference type="Proteomes" id="UP000009246">
    <property type="component" value="Segment"/>
</dbReference>
<dbReference type="GO" id="GO:0044177">
    <property type="term" value="C:host cell Golgi apparatus"/>
    <property type="evidence" value="ECO:0007669"/>
    <property type="project" value="UniProtKB-SubCell"/>
</dbReference>
<dbReference type="GO" id="GO:0019033">
    <property type="term" value="C:viral tegument"/>
    <property type="evidence" value="ECO:0007669"/>
    <property type="project" value="UniProtKB-SubCell"/>
</dbReference>
<dbReference type="HAMAP" id="MF_04038">
    <property type="entry name" value="HSV_CEP1"/>
    <property type="match status" value="1"/>
</dbReference>
<dbReference type="InterPro" id="IPR002600">
    <property type="entry name" value="Herpes_UL7"/>
</dbReference>
<dbReference type="Pfam" id="PF01677">
    <property type="entry name" value="Herpes_UL7"/>
    <property type="match status" value="1"/>
</dbReference>
<comment type="function">
    <text evidence="1">Plays a critical role in cytoplasmic virus egress. Participates in the final step of tegumentation and envelope acquisition within the host cytoplasm.</text>
</comment>
<comment type="subcellular location">
    <subcellularLocation>
        <location evidence="1">Virion</location>
    </subcellularLocation>
    <subcellularLocation>
        <location evidence="1">Virion tegument</location>
    </subcellularLocation>
    <subcellularLocation>
        <location evidence="1">Host cytoplasm</location>
    </subcellularLocation>
    <subcellularLocation>
        <location evidence="1">Host Golgi apparatus</location>
    </subcellularLocation>
</comment>
<comment type="similarity">
    <text evidence="1">Belongs to the herpesviridae cytoplasmic envelopment protein 1 family.</text>
</comment>
<evidence type="ECO:0000255" key="1">
    <source>
        <dbReference type="HAMAP-Rule" id="MF_04038"/>
    </source>
</evidence>
<name>CEP1_HHV7J</name>
<accession>P52458</accession>
<keyword id="KW-1035">Host cytoplasm</keyword>
<keyword id="KW-1040">Host Golgi apparatus</keyword>
<keyword id="KW-1185">Reference proteome</keyword>
<keyword id="KW-0946">Virion</keyword>
<keyword id="KW-0920">Virion tegument</keyword>
<organismHost>
    <name type="scientific">Homo sapiens</name>
    <name type="common">Human</name>
    <dbReference type="NCBI Taxonomy" id="9606"/>
</organismHost>
<proteinExistence type="inferred from homology"/>
<sequence>MTLPASLKGFETLDIFNISSVRNICELNKHAEHVSIKNLPLIDISVGNDDVWFHLEDGTIVNGKSYKSICEKTLGFLGFIGIILLDSEDTLEEIRLSKTQCKRRIIYLILKEDTEFLLCGIVYALENLPIKGQTLLKLRDIIKKISVTLPVSKLLACTCQKLISILRYIFYDDKQQDVLDKVPPIIQLYYESKTANIHMLNLFFKSHDNDDTCTLSLNTRRLQDDSKYLIDFLKSAICDAFSKEYKMTEIEKTSLH</sequence>
<protein>
    <recommendedName>
        <fullName evidence="1">Cytoplasmic envelopment protein 1</fullName>
    </recommendedName>
</protein>
<organism>
    <name type="scientific">Human herpesvirus 7 (strain JI)</name>
    <name type="common">HHV-7</name>
    <name type="synonym">Human T lymphotropic virus</name>
    <dbReference type="NCBI Taxonomy" id="57278"/>
    <lineage>
        <taxon>Viruses</taxon>
        <taxon>Duplodnaviria</taxon>
        <taxon>Heunggongvirae</taxon>
        <taxon>Peploviricota</taxon>
        <taxon>Herviviricetes</taxon>
        <taxon>Herpesvirales</taxon>
        <taxon>Orthoherpesviridae</taxon>
        <taxon>Betaherpesvirinae</taxon>
        <taxon>Roseolovirus</taxon>
        <taxon>Roseolovirus humanbeta7</taxon>
        <taxon>Human betaherpesvirus 7</taxon>
    </lineage>
</organism>
<gene>
    <name type="primary">U75</name>
</gene>